<sequence>MDPPLPSLHSPQWASLLQLHHGLMWLRRFAVLVRVYALVVFHIAISTAFCGMIWLGIPDSHNICQHESSPLLLVFAPSLLWCLVLIQGERHPDDVVLTMGYVGLLSVTTVFYTWCSDLPAILIDYTLVLTLWIACTGAVMVGDSFRAKRWELICSRVLTSVFFITLWVIGDQTVFHHQRILLYGYGAIVFLMMTVTFYGTRYIRDELPAAQTLRGSLLIYVGLVTMFKITLIVLSPNLWRLPWTTVFAAFRSSYCEGGGGS</sequence>
<gene>
    <name type="primary">US13</name>
</gene>
<organism>
    <name type="scientific">Human cytomegalovirus (strain Merlin)</name>
    <name type="common">HHV-5</name>
    <name type="synonym">Human herpesvirus 5</name>
    <dbReference type="NCBI Taxonomy" id="295027"/>
    <lineage>
        <taxon>Viruses</taxon>
        <taxon>Duplodnaviria</taxon>
        <taxon>Heunggongvirae</taxon>
        <taxon>Peploviricota</taxon>
        <taxon>Herviviricetes</taxon>
        <taxon>Herpesvirales</taxon>
        <taxon>Orthoherpesviridae</taxon>
        <taxon>Betaherpesvirinae</taxon>
        <taxon>Cytomegalovirus</taxon>
        <taxon>Cytomegalovirus humanbeta5</taxon>
        <taxon>Human cytomegalovirus</taxon>
    </lineage>
</organism>
<dbReference type="EMBL" id="AY446894">
    <property type="protein sequence ID" value="AAR31702.1"/>
    <property type="molecule type" value="Genomic_DNA"/>
</dbReference>
<dbReference type="RefSeq" id="YP_081598.1">
    <property type="nucleotide sequence ID" value="NC_006273.2"/>
</dbReference>
<dbReference type="DNASU" id="3077576"/>
<dbReference type="GeneID" id="3077576"/>
<dbReference type="KEGG" id="vg:3077576"/>
<dbReference type="Reactome" id="R-HSA-9609690">
    <property type="pathway name" value="HCMV Early Events"/>
</dbReference>
<dbReference type="Proteomes" id="UP000000938">
    <property type="component" value="Segment"/>
</dbReference>
<dbReference type="GO" id="GO:0033644">
    <property type="term" value="C:host cell membrane"/>
    <property type="evidence" value="ECO:0007669"/>
    <property type="project" value="UniProtKB-SubCell"/>
</dbReference>
<dbReference type="GO" id="GO:0016020">
    <property type="term" value="C:membrane"/>
    <property type="evidence" value="ECO:0007669"/>
    <property type="project" value="UniProtKB-KW"/>
</dbReference>
<protein>
    <recommendedName>
        <fullName>Membrane protein US13</fullName>
    </recommendedName>
</protein>
<feature type="chain" id="PRO_0000418252" description="Membrane protein US13">
    <location>
        <begin position="1"/>
        <end position="261"/>
    </location>
</feature>
<feature type="transmembrane region" description="Helical" evidence="1">
    <location>
        <begin position="37"/>
        <end position="57"/>
    </location>
</feature>
<feature type="transmembrane region" description="Helical" evidence="1">
    <location>
        <begin position="68"/>
        <end position="88"/>
    </location>
</feature>
<feature type="transmembrane region" description="Helical" evidence="1">
    <location>
        <begin position="95"/>
        <end position="115"/>
    </location>
</feature>
<feature type="transmembrane region" description="Helical" evidence="1">
    <location>
        <begin position="121"/>
        <end position="141"/>
    </location>
</feature>
<feature type="transmembrane region" description="Helical" evidence="1">
    <location>
        <begin position="150"/>
        <end position="170"/>
    </location>
</feature>
<feature type="transmembrane region" description="Helical" evidence="1">
    <location>
        <begin position="180"/>
        <end position="200"/>
    </location>
</feature>
<feature type="transmembrane region" description="Helical" evidence="1">
    <location>
        <begin position="215"/>
        <end position="235"/>
    </location>
</feature>
<reference key="1">
    <citation type="journal article" date="2004" name="J. Gen. Virol.">
        <title>Genetic content of wild-type human cytomegalovirus.</title>
        <authorList>
            <person name="Dolan A."/>
            <person name="Cunningham C."/>
            <person name="Hector R.D."/>
            <person name="Hassan-Walker A.F."/>
            <person name="Lee L."/>
            <person name="Addison C."/>
            <person name="Dargan D.J."/>
            <person name="McGeoch D.J."/>
            <person name="Gatherer D."/>
            <person name="Emery V.C."/>
            <person name="Griffiths P.D."/>
            <person name="Sinzger C."/>
            <person name="McSharry B.P."/>
            <person name="Wilkinson G.W.G."/>
            <person name="Davison A.J."/>
        </authorList>
    </citation>
    <scope>NUCLEOTIDE SEQUENCE [LARGE SCALE GENOMIC DNA]</scope>
</reference>
<organismHost>
    <name type="scientific">Homo sapiens</name>
    <name type="common">Human</name>
    <dbReference type="NCBI Taxonomy" id="9606"/>
</organismHost>
<accession>F5H9I4</accession>
<evidence type="ECO:0000255" key="1"/>
<evidence type="ECO:0000305" key="2"/>
<comment type="subcellular location">
    <subcellularLocation>
        <location evidence="2">Host membrane</location>
        <topology evidence="2">Multi-pass membrane protein</topology>
    </subcellularLocation>
</comment>
<comment type="similarity">
    <text evidence="2">Belongs to the cytomegalovirus US12 family.</text>
</comment>
<keyword id="KW-1043">Host membrane</keyword>
<keyword id="KW-0472">Membrane</keyword>
<keyword id="KW-1185">Reference proteome</keyword>
<keyword id="KW-0812">Transmembrane</keyword>
<keyword id="KW-1133">Transmembrane helix</keyword>
<name>US13_HCMVM</name>
<proteinExistence type="inferred from homology"/>